<accession>P01511</accession>
<dbReference type="PIR" id="A01773">
    <property type="entry name" value="CKAODP"/>
</dbReference>
<dbReference type="SMR" id="P01511"/>
<dbReference type="GO" id="GO:0005576">
    <property type="term" value="C:extracellular region"/>
    <property type="evidence" value="ECO:0007669"/>
    <property type="project" value="UniProtKB-SubCell"/>
</dbReference>
<dbReference type="GO" id="GO:0019731">
    <property type="term" value="P:antibacterial humoral response"/>
    <property type="evidence" value="ECO:0007669"/>
    <property type="project" value="InterPro"/>
</dbReference>
<dbReference type="GO" id="GO:0050830">
    <property type="term" value="P:defense response to Gram-positive bacterium"/>
    <property type="evidence" value="ECO:0007669"/>
    <property type="project" value="UniProtKB-ARBA"/>
</dbReference>
<dbReference type="GO" id="GO:0045087">
    <property type="term" value="P:innate immune response"/>
    <property type="evidence" value="ECO:0007669"/>
    <property type="project" value="UniProtKB-KW"/>
</dbReference>
<dbReference type="InterPro" id="IPR000875">
    <property type="entry name" value="Cecropin"/>
</dbReference>
<dbReference type="Pfam" id="PF00272">
    <property type="entry name" value="Cecropin"/>
    <property type="match status" value="1"/>
</dbReference>
<dbReference type="PROSITE" id="PS00268">
    <property type="entry name" value="CECROPIN"/>
    <property type="match status" value="1"/>
</dbReference>
<reference key="1">
    <citation type="journal article" date="1982" name="Eur. J. Biochem.">
        <title>Insect immunity: isolation and structure of cecropins B and D from pupae of the Chinese oak silk moth, Antheraea pernyi.</title>
        <authorList>
            <person name="Qu X.-M."/>
            <person name="Steiner H."/>
            <person name="Engstroem A."/>
            <person name="Bennich H."/>
            <person name="Boman H.G."/>
        </authorList>
    </citation>
    <scope>PROTEIN SEQUENCE</scope>
    <scope>AMIDATION AT LYS-36</scope>
</reference>
<proteinExistence type="evidence at protein level"/>
<name>CECD_ANTPE</name>
<sequence length="36" mass="3807">WNPFKELERAGQRVRDAIISAGPAVATVAQATALAK</sequence>
<keyword id="KW-0027">Amidation</keyword>
<keyword id="KW-0044">Antibiotic</keyword>
<keyword id="KW-0929">Antimicrobial</keyword>
<keyword id="KW-0903">Direct protein sequencing</keyword>
<keyword id="KW-0391">Immunity</keyword>
<keyword id="KW-0399">Innate immunity</keyword>
<keyword id="KW-0964">Secreted</keyword>
<feature type="peptide" id="PRO_0000044678" description="Cecropin-D">
    <location>
        <begin position="1"/>
        <end position="36"/>
    </location>
</feature>
<feature type="modified residue" description="Lysine amide" evidence="1">
    <location>
        <position position="36"/>
    </location>
</feature>
<comment type="function">
    <text>Cecropins have lytic and antibacterial activity against several Gram-positive and Gram-negative bacteria.</text>
</comment>
<comment type="subcellular location">
    <subcellularLocation>
        <location>Secreted</location>
    </subcellularLocation>
</comment>
<comment type="similarity">
    <text evidence="2">Belongs to the cecropin family.</text>
</comment>
<evidence type="ECO:0000269" key="1">
    <source>
    </source>
</evidence>
<evidence type="ECO:0000305" key="2"/>
<protein>
    <recommendedName>
        <fullName>Cecropin-D</fullName>
    </recommendedName>
</protein>
<organism>
    <name type="scientific">Antheraea pernyi</name>
    <name type="common">Chinese oak silk moth</name>
    <name type="synonym">Bombyx pernyi</name>
    <dbReference type="NCBI Taxonomy" id="7119"/>
    <lineage>
        <taxon>Eukaryota</taxon>
        <taxon>Metazoa</taxon>
        <taxon>Ecdysozoa</taxon>
        <taxon>Arthropoda</taxon>
        <taxon>Hexapoda</taxon>
        <taxon>Insecta</taxon>
        <taxon>Pterygota</taxon>
        <taxon>Neoptera</taxon>
        <taxon>Endopterygota</taxon>
        <taxon>Lepidoptera</taxon>
        <taxon>Glossata</taxon>
        <taxon>Ditrysia</taxon>
        <taxon>Bombycoidea</taxon>
        <taxon>Saturniidae</taxon>
        <taxon>Saturniinae</taxon>
        <taxon>Saturniini</taxon>
        <taxon>Antheraea</taxon>
    </lineage>
</organism>